<organism>
    <name type="scientific">Trichodesmium erythraeum (strain IMS101)</name>
    <dbReference type="NCBI Taxonomy" id="203124"/>
    <lineage>
        <taxon>Bacteria</taxon>
        <taxon>Bacillati</taxon>
        <taxon>Cyanobacteriota</taxon>
        <taxon>Cyanophyceae</taxon>
        <taxon>Oscillatoriophycideae</taxon>
        <taxon>Oscillatoriales</taxon>
        <taxon>Microcoleaceae</taxon>
        <taxon>Trichodesmium</taxon>
    </lineage>
</organism>
<proteinExistence type="inferred from homology"/>
<dbReference type="EC" id="5.3.1.6" evidence="1"/>
<dbReference type="EMBL" id="CP000393">
    <property type="protein sequence ID" value="ABG51732.1"/>
    <property type="molecule type" value="Genomic_DNA"/>
</dbReference>
<dbReference type="RefSeq" id="WP_011612095.1">
    <property type="nucleotide sequence ID" value="NC_008312.1"/>
</dbReference>
<dbReference type="SMR" id="Q111U2"/>
<dbReference type="STRING" id="203124.Tery_2528"/>
<dbReference type="KEGG" id="ter:Tery_2528"/>
<dbReference type="eggNOG" id="COG0120">
    <property type="taxonomic scope" value="Bacteria"/>
</dbReference>
<dbReference type="HOGENOM" id="CLU_056590_1_1_3"/>
<dbReference type="OrthoDB" id="5870696at2"/>
<dbReference type="UniPathway" id="UPA00115">
    <property type="reaction ID" value="UER00412"/>
</dbReference>
<dbReference type="GO" id="GO:0005829">
    <property type="term" value="C:cytosol"/>
    <property type="evidence" value="ECO:0007669"/>
    <property type="project" value="TreeGrafter"/>
</dbReference>
<dbReference type="GO" id="GO:0004751">
    <property type="term" value="F:ribose-5-phosphate isomerase activity"/>
    <property type="evidence" value="ECO:0007669"/>
    <property type="project" value="UniProtKB-UniRule"/>
</dbReference>
<dbReference type="GO" id="GO:0006014">
    <property type="term" value="P:D-ribose metabolic process"/>
    <property type="evidence" value="ECO:0007669"/>
    <property type="project" value="TreeGrafter"/>
</dbReference>
<dbReference type="GO" id="GO:0009052">
    <property type="term" value="P:pentose-phosphate shunt, non-oxidative branch"/>
    <property type="evidence" value="ECO:0007669"/>
    <property type="project" value="UniProtKB-UniRule"/>
</dbReference>
<dbReference type="CDD" id="cd01398">
    <property type="entry name" value="RPI_A"/>
    <property type="match status" value="1"/>
</dbReference>
<dbReference type="FunFam" id="3.30.70.260:FF:000018">
    <property type="entry name" value="Ribose-5-phosphate isomerase A"/>
    <property type="match status" value="1"/>
</dbReference>
<dbReference type="FunFam" id="3.40.50.1360:FF:000001">
    <property type="entry name" value="Ribose-5-phosphate isomerase A"/>
    <property type="match status" value="1"/>
</dbReference>
<dbReference type="Gene3D" id="3.30.70.260">
    <property type="match status" value="1"/>
</dbReference>
<dbReference type="Gene3D" id="3.40.50.1360">
    <property type="match status" value="1"/>
</dbReference>
<dbReference type="HAMAP" id="MF_00170">
    <property type="entry name" value="Rib_5P_isom_A"/>
    <property type="match status" value="1"/>
</dbReference>
<dbReference type="InterPro" id="IPR037171">
    <property type="entry name" value="NagB/RpiA_transferase-like"/>
</dbReference>
<dbReference type="InterPro" id="IPR020672">
    <property type="entry name" value="Ribose5P_isomerase_typA_subgr"/>
</dbReference>
<dbReference type="InterPro" id="IPR004788">
    <property type="entry name" value="Ribose5P_isomerase_type_A"/>
</dbReference>
<dbReference type="NCBIfam" id="NF001924">
    <property type="entry name" value="PRK00702.1"/>
    <property type="match status" value="1"/>
</dbReference>
<dbReference type="NCBIfam" id="TIGR00021">
    <property type="entry name" value="rpiA"/>
    <property type="match status" value="1"/>
</dbReference>
<dbReference type="PANTHER" id="PTHR11934">
    <property type="entry name" value="RIBOSE-5-PHOSPHATE ISOMERASE"/>
    <property type="match status" value="1"/>
</dbReference>
<dbReference type="PANTHER" id="PTHR11934:SF0">
    <property type="entry name" value="RIBOSE-5-PHOSPHATE ISOMERASE"/>
    <property type="match status" value="1"/>
</dbReference>
<dbReference type="Pfam" id="PF06026">
    <property type="entry name" value="Rib_5-P_isom_A"/>
    <property type="match status" value="1"/>
</dbReference>
<dbReference type="SUPFAM" id="SSF75445">
    <property type="entry name" value="D-ribose-5-phosphate isomerase (RpiA), lid domain"/>
    <property type="match status" value="1"/>
</dbReference>
<dbReference type="SUPFAM" id="SSF100950">
    <property type="entry name" value="NagB/RpiA/CoA transferase-like"/>
    <property type="match status" value="1"/>
</dbReference>
<feature type="chain" id="PRO_1000097703" description="Ribose-5-phosphate isomerase A">
    <location>
        <begin position="1"/>
        <end position="237"/>
    </location>
</feature>
<feature type="active site" description="Proton acceptor" evidence="1">
    <location>
        <position position="112"/>
    </location>
</feature>
<feature type="binding site" evidence="1">
    <location>
        <begin position="33"/>
        <end position="36"/>
    </location>
    <ligand>
        <name>substrate</name>
    </ligand>
</feature>
<feature type="binding site" evidence="1">
    <location>
        <begin position="90"/>
        <end position="93"/>
    </location>
    <ligand>
        <name>substrate</name>
    </ligand>
</feature>
<feature type="binding site" evidence="1">
    <location>
        <begin position="103"/>
        <end position="106"/>
    </location>
    <ligand>
        <name>substrate</name>
    </ligand>
</feature>
<feature type="binding site" evidence="1">
    <location>
        <position position="130"/>
    </location>
    <ligand>
        <name>substrate</name>
    </ligand>
</feature>
<keyword id="KW-0413">Isomerase</keyword>
<protein>
    <recommendedName>
        <fullName evidence="1">Ribose-5-phosphate isomerase A</fullName>
        <ecNumber evidence="1">5.3.1.6</ecNumber>
    </recommendedName>
    <alternativeName>
        <fullName evidence="1">Phosphoriboisomerase A</fullName>
        <shortName evidence="1">PRI</shortName>
    </alternativeName>
</protein>
<reference key="1">
    <citation type="journal article" date="2015" name="Proc. Natl. Acad. Sci. U.S.A.">
        <title>Trichodesmium genome maintains abundant, widespread noncoding DNA in situ, despite oligotrophic lifestyle.</title>
        <authorList>
            <person name="Walworth N."/>
            <person name="Pfreundt U."/>
            <person name="Nelson W.C."/>
            <person name="Mincer T."/>
            <person name="Heidelberg J.F."/>
            <person name="Fu F."/>
            <person name="Waterbury J.B."/>
            <person name="Glavina del Rio T."/>
            <person name="Goodwin L."/>
            <person name="Kyrpides N.C."/>
            <person name="Land M.L."/>
            <person name="Woyke T."/>
            <person name="Hutchins D.A."/>
            <person name="Hess W.R."/>
            <person name="Webb E.A."/>
        </authorList>
    </citation>
    <scope>NUCLEOTIDE SEQUENCE [LARGE SCALE GENOMIC DNA]</scope>
    <source>
        <strain>IMS101</strain>
    </source>
</reference>
<sequence>MVTEQDPTTLMKQQVGKAAAEEVKSGMIVGLGTGSTTAYMIQFLGELLQRGELKDIKGIPTSFQSTVLAKKYGVPLTTLDEVDYMDIAIDGADEVDPQKNLIKGGGAAHTREKIVDCLAEKFVVVVDSSKLVDKLGSTFLLPVEVIPMAMNPVIRAIEKLGGQPEVRMGVKKAGPIVTDQGNLVIDVKFDSIDNPGELEKSLNNIPGVLENGLFVGVADVILVGEIDNGKPIVRTIS</sequence>
<name>RPIA_TRIEI</name>
<gene>
    <name evidence="1" type="primary">rpiA</name>
    <name type="ordered locus">Tery_2528</name>
</gene>
<comment type="function">
    <text evidence="1">Catalyzes the reversible conversion of ribose-5-phosphate to ribulose 5-phosphate.</text>
</comment>
<comment type="catalytic activity">
    <reaction evidence="1">
        <text>aldehydo-D-ribose 5-phosphate = D-ribulose 5-phosphate</text>
        <dbReference type="Rhea" id="RHEA:14657"/>
        <dbReference type="ChEBI" id="CHEBI:58121"/>
        <dbReference type="ChEBI" id="CHEBI:58273"/>
        <dbReference type="EC" id="5.3.1.6"/>
    </reaction>
</comment>
<comment type="pathway">
    <text evidence="1">Carbohydrate degradation; pentose phosphate pathway; D-ribose 5-phosphate from D-ribulose 5-phosphate (non-oxidative stage): step 1/1.</text>
</comment>
<comment type="subunit">
    <text evidence="1">Homodimer.</text>
</comment>
<comment type="similarity">
    <text evidence="1">Belongs to the ribose 5-phosphate isomerase family.</text>
</comment>
<evidence type="ECO:0000255" key="1">
    <source>
        <dbReference type="HAMAP-Rule" id="MF_00170"/>
    </source>
</evidence>
<accession>Q111U2</accession>